<keyword id="KW-0046">Antibiotic resistance</keyword>
<keyword id="KW-0997">Cell inner membrane</keyword>
<keyword id="KW-1003">Cell membrane</keyword>
<keyword id="KW-0328">Glycosyltransferase</keyword>
<keyword id="KW-0441">Lipid A biosynthesis</keyword>
<keyword id="KW-0444">Lipid biosynthesis</keyword>
<keyword id="KW-0443">Lipid metabolism</keyword>
<keyword id="KW-0448">Lipopolysaccharide biosynthesis</keyword>
<keyword id="KW-0472">Membrane</keyword>
<keyword id="KW-1185">Reference proteome</keyword>
<keyword id="KW-0808">Transferase</keyword>
<keyword id="KW-0812">Transmembrane</keyword>
<keyword id="KW-1133">Transmembrane helix</keyword>
<dbReference type="EC" id="2.4.2.53" evidence="1"/>
<dbReference type="EMBL" id="CP000468">
    <property type="protein sequence ID" value="ABJ01646.1"/>
    <property type="molecule type" value="Genomic_DNA"/>
</dbReference>
<dbReference type="RefSeq" id="WP_000461633.1">
    <property type="nucleotide sequence ID" value="NZ_CADILS010000004.1"/>
</dbReference>
<dbReference type="SMR" id="A1ADA6"/>
<dbReference type="CAZy" id="GT2">
    <property type="family name" value="Glycosyltransferase Family 2"/>
</dbReference>
<dbReference type="KEGG" id="ecv:APECO1_4307"/>
<dbReference type="HOGENOM" id="CLU_033536_0_0_6"/>
<dbReference type="UniPathway" id="UPA00030"/>
<dbReference type="UniPathway" id="UPA00036">
    <property type="reaction ID" value="UER00495"/>
</dbReference>
<dbReference type="Proteomes" id="UP000008216">
    <property type="component" value="Chromosome"/>
</dbReference>
<dbReference type="GO" id="GO:0005886">
    <property type="term" value="C:plasma membrane"/>
    <property type="evidence" value="ECO:0007669"/>
    <property type="project" value="UniProtKB-SubCell"/>
</dbReference>
<dbReference type="GO" id="GO:0016780">
    <property type="term" value="F:phosphotransferase activity, for other substituted phosphate groups"/>
    <property type="evidence" value="ECO:0007669"/>
    <property type="project" value="UniProtKB-UniRule"/>
</dbReference>
<dbReference type="GO" id="GO:0099621">
    <property type="term" value="F:undecaprenyl-phosphate 4-deoxy-4-formamido-L-arabinose transferase activity"/>
    <property type="evidence" value="ECO:0007669"/>
    <property type="project" value="UniProtKB-EC"/>
</dbReference>
<dbReference type="GO" id="GO:0036108">
    <property type="term" value="P:4-amino-4-deoxy-alpha-L-arabinopyranosyl undecaprenyl phosphate biosynthetic process"/>
    <property type="evidence" value="ECO:0007669"/>
    <property type="project" value="UniProtKB-UniRule"/>
</dbReference>
<dbReference type="GO" id="GO:0009245">
    <property type="term" value="P:lipid A biosynthetic process"/>
    <property type="evidence" value="ECO:0007669"/>
    <property type="project" value="UniProtKB-UniRule"/>
</dbReference>
<dbReference type="GO" id="GO:0009103">
    <property type="term" value="P:lipopolysaccharide biosynthetic process"/>
    <property type="evidence" value="ECO:0007669"/>
    <property type="project" value="UniProtKB-UniRule"/>
</dbReference>
<dbReference type="GO" id="GO:0046677">
    <property type="term" value="P:response to antibiotic"/>
    <property type="evidence" value="ECO:0007669"/>
    <property type="project" value="UniProtKB-KW"/>
</dbReference>
<dbReference type="CDD" id="cd04187">
    <property type="entry name" value="DPM1_like_bac"/>
    <property type="match status" value="1"/>
</dbReference>
<dbReference type="FunFam" id="3.90.550.10:FF:000019">
    <property type="entry name" value="Undecaprenyl-phosphate 4-deoxy-4-formamido-L-arabinose transferase"/>
    <property type="match status" value="1"/>
</dbReference>
<dbReference type="Gene3D" id="3.90.550.10">
    <property type="entry name" value="Spore Coat Polysaccharide Biosynthesis Protein SpsA, Chain A"/>
    <property type="match status" value="1"/>
</dbReference>
<dbReference type="HAMAP" id="MF_01164">
    <property type="entry name" value="ArnC_transfer"/>
    <property type="match status" value="1"/>
</dbReference>
<dbReference type="InterPro" id="IPR022857">
    <property type="entry name" value="ArnC_tfrase"/>
</dbReference>
<dbReference type="InterPro" id="IPR001173">
    <property type="entry name" value="Glyco_trans_2-like"/>
</dbReference>
<dbReference type="InterPro" id="IPR050256">
    <property type="entry name" value="Glycosyltransferase_2"/>
</dbReference>
<dbReference type="InterPro" id="IPR029044">
    <property type="entry name" value="Nucleotide-diphossugar_trans"/>
</dbReference>
<dbReference type="NCBIfam" id="NF007986">
    <property type="entry name" value="PRK10714.1"/>
    <property type="match status" value="1"/>
</dbReference>
<dbReference type="PANTHER" id="PTHR48090:SF3">
    <property type="entry name" value="UNDECAPRENYL-PHOSPHATE 4-DEOXY-4-FORMAMIDO-L-ARABINOSE TRANSFERASE"/>
    <property type="match status" value="1"/>
</dbReference>
<dbReference type="PANTHER" id="PTHR48090">
    <property type="entry name" value="UNDECAPRENYL-PHOSPHATE 4-DEOXY-4-FORMAMIDO-L-ARABINOSE TRANSFERASE-RELATED"/>
    <property type="match status" value="1"/>
</dbReference>
<dbReference type="Pfam" id="PF00535">
    <property type="entry name" value="Glycos_transf_2"/>
    <property type="match status" value="1"/>
</dbReference>
<dbReference type="SUPFAM" id="SSF53448">
    <property type="entry name" value="Nucleotide-diphospho-sugar transferases"/>
    <property type="match status" value="1"/>
</dbReference>
<organism>
    <name type="scientific">Escherichia coli O1:K1 / APEC</name>
    <dbReference type="NCBI Taxonomy" id="405955"/>
    <lineage>
        <taxon>Bacteria</taxon>
        <taxon>Pseudomonadati</taxon>
        <taxon>Pseudomonadota</taxon>
        <taxon>Gammaproteobacteria</taxon>
        <taxon>Enterobacterales</taxon>
        <taxon>Enterobacteriaceae</taxon>
        <taxon>Escherichia</taxon>
    </lineage>
</organism>
<accession>A1ADA6</accession>
<protein>
    <recommendedName>
        <fullName evidence="1">Undecaprenyl-phosphate 4-deoxy-4-formamido-L-arabinose transferase</fullName>
        <ecNumber evidence="1">2.4.2.53</ecNumber>
    </recommendedName>
    <alternativeName>
        <fullName evidence="1">Undecaprenyl-phosphate Ara4FN transferase</fullName>
        <shortName evidence="1">Ara4FN transferase</shortName>
    </alternativeName>
</protein>
<comment type="function">
    <text evidence="1">Catalyzes the transfer of 4-deoxy-4-formamido-L-arabinose from UDP to undecaprenyl phosphate. The modified arabinose is attached to lipid A and is required for resistance to polymyxin and cationic antimicrobial peptides.</text>
</comment>
<comment type="catalytic activity">
    <reaction evidence="1">
        <text>UDP-4-deoxy-4-formamido-beta-L-arabinose + di-trans,octa-cis-undecaprenyl phosphate = 4-deoxy-4-formamido-alpha-L-arabinopyranosyl di-trans,octa-cis-undecaprenyl phosphate + UDP</text>
        <dbReference type="Rhea" id="RHEA:27722"/>
        <dbReference type="ChEBI" id="CHEBI:58223"/>
        <dbReference type="ChEBI" id="CHEBI:58709"/>
        <dbReference type="ChEBI" id="CHEBI:58909"/>
        <dbReference type="ChEBI" id="CHEBI:60392"/>
        <dbReference type="EC" id="2.4.2.53"/>
    </reaction>
</comment>
<comment type="pathway">
    <text evidence="1">Glycolipid biosynthesis; 4-amino-4-deoxy-alpha-L-arabinose undecaprenyl phosphate biosynthesis; 4-amino-4-deoxy-alpha-L-arabinose undecaprenyl phosphate from UDP-4-deoxy-4-formamido-beta-L-arabinose and undecaprenyl phosphate: step 1/2.</text>
</comment>
<comment type="pathway">
    <text evidence="1">Bacterial outer membrane biogenesis; lipopolysaccharide biosynthesis.</text>
</comment>
<comment type="subcellular location">
    <subcellularLocation>
        <location evidence="1">Cell inner membrane</location>
        <topology evidence="1">Multi-pass membrane protein</topology>
    </subcellularLocation>
</comment>
<comment type="similarity">
    <text evidence="1">Belongs to the glycosyltransferase 2 family.</text>
</comment>
<feature type="chain" id="PRO_1000065651" description="Undecaprenyl-phosphate 4-deoxy-4-formamido-L-arabinose transferase">
    <location>
        <begin position="1"/>
        <end position="322"/>
    </location>
</feature>
<feature type="topological domain" description="Cytoplasmic" evidence="1">
    <location>
        <begin position="1"/>
        <end position="235"/>
    </location>
</feature>
<feature type="transmembrane region" description="Helical" evidence="1">
    <location>
        <begin position="236"/>
        <end position="256"/>
    </location>
</feature>
<feature type="topological domain" description="Periplasmic" evidence="1">
    <location>
        <begin position="257"/>
        <end position="269"/>
    </location>
</feature>
<feature type="transmembrane region" description="Helical" evidence="1">
    <location>
        <begin position="270"/>
        <end position="290"/>
    </location>
</feature>
<feature type="topological domain" description="Cytoplasmic" evidence="1">
    <location>
        <begin position="291"/>
        <end position="322"/>
    </location>
</feature>
<name>ARNC_ECOK1</name>
<proteinExistence type="inferred from homology"/>
<evidence type="ECO:0000255" key="1">
    <source>
        <dbReference type="HAMAP-Rule" id="MF_01164"/>
    </source>
</evidence>
<reference key="1">
    <citation type="journal article" date="2007" name="J. Bacteriol.">
        <title>The genome sequence of avian pathogenic Escherichia coli strain O1:K1:H7 shares strong similarities with human extraintestinal pathogenic E. coli genomes.</title>
        <authorList>
            <person name="Johnson T.J."/>
            <person name="Kariyawasam S."/>
            <person name="Wannemuehler Y."/>
            <person name="Mangiamele P."/>
            <person name="Johnson S.J."/>
            <person name="Doetkott C."/>
            <person name="Skyberg J.A."/>
            <person name="Lynne A.M."/>
            <person name="Johnson J.R."/>
            <person name="Nolan L.K."/>
        </authorList>
    </citation>
    <scope>NUCLEOTIDE SEQUENCE [LARGE SCALE GENOMIC DNA]</scope>
</reference>
<gene>
    <name evidence="1" type="primary">arnC</name>
    <name type="ordered locus">Ecok1_21520</name>
    <name type="ORF">APECO1_4307</name>
</gene>
<sequence length="322" mass="36252">MFEIHPVKKVSVVIPVYNEQESLPELIRRTTAACESLGKEYEILLIDDGSSDNSAHMLVEASQAEGSHIVSILLNRNYGQHSAIMAGFSHVTGDLIITLDADLQNPPEEIPRLVAKADEGYDVVGTVRQNRQDSWFRKTASKMINRLIQRTTGKAMGDYGCMLRAYRRHIVDAMLHCHERSTFIPILANIFARRAIEIPVHHAEREFGESKYSFMRLINLMYDLVTCLTTTPLRMLSLLGSIIAIGGFSIAVLLVILRLTFGPQWAAEGVFMLFAVLFTFIGAQFIGMGLLGEYIGRIYTDVRARPRYFVQQVIRPSSKENE</sequence>